<sequence>MTNRKDDHIKYALKYQSPYNAFDDIELIHHSLPSYDLSDIDLSTHFAGQDFDFPFYINAMTGGSQKGKAVNEKLAKVAAATGIVMVTGSYSAALKNPNDDSYRLHEVADNLKLATNIGLDKPVALGQQTVQEMQPLFLQVHVNVMQELLMPEGERVFHTWKKHLAEYASQIPVPVILKEVGFGMDVNSIKLAHDLGIQTFDISGRGGTSFAYIENQRGGDRSYLNDWGQTTVQCLLNAQGLMDQVEILASGGVRHPLDMIKCFVLGARAVGLSRTVLELVEKYPTERVIAIVNGWKEELKIIMCALDCKTIKELKGVDYLLYGRLQQVN</sequence>
<proteinExistence type="inferred from homology"/>
<gene>
    <name evidence="1" type="primary">fni</name>
    <name type="ordered locus">spyM18_0940</name>
</gene>
<comment type="function">
    <text evidence="1">Involved in the biosynthesis of isoprenoids. Catalyzes the 1,3-allylic rearrangement of the homoallylic substrate isopentenyl (IPP) to its allylic isomer, dimethylallyl diphosphate (DMAPP).</text>
</comment>
<comment type="catalytic activity">
    <reaction evidence="1">
        <text>isopentenyl diphosphate = dimethylallyl diphosphate</text>
        <dbReference type="Rhea" id="RHEA:23284"/>
        <dbReference type="ChEBI" id="CHEBI:57623"/>
        <dbReference type="ChEBI" id="CHEBI:128769"/>
        <dbReference type="EC" id="5.3.3.2"/>
    </reaction>
</comment>
<comment type="cofactor">
    <cofactor evidence="1">
        <name>FMN</name>
        <dbReference type="ChEBI" id="CHEBI:58210"/>
    </cofactor>
</comment>
<comment type="cofactor">
    <cofactor evidence="1">
        <name>NADPH</name>
        <dbReference type="ChEBI" id="CHEBI:57783"/>
    </cofactor>
</comment>
<comment type="cofactor">
    <cofactor evidence="1">
        <name>Mg(2+)</name>
        <dbReference type="ChEBI" id="CHEBI:18420"/>
    </cofactor>
</comment>
<comment type="subunit">
    <text evidence="1">Homooctamer. Dimer of tetramers.</text>
</comment>
<comment type="subcellular location">
    <subcellularLocation>
        <location evidence="1">Cytoplasm</location>
    </subcellularLocation>
</comment>
<comment type="similarity">
    <text evidence="1">Belongs to the IPP isomerase type 2 family.</text>
</comment>
<accession>P65105</accession>
<accession>Q9A095</accession>
<evidence type="ECO:0000255" key="1">
    <source>
        <dbReference type="HAMAP-Rule" id="MF_00354"/>
    </source>
</evidence>
<keyword id="KW-0963">Cytoplasm</keyword>
<keyword id="KW-0285">Flavoprotein</keyword>
<keyword id="KW-0288">FMN</keyword>
<keyword id="KW-0413">Isomerase</keyword>
<keyword id="KW-0414">Isoprene biosynthesis</keyword>
<keyword id="KW-0460">Magnesium</keyword>
<keyword id="KW-0479">Metal-binding</keyword>
<keyword id="KW-0521">NADP</keyword>
<dbReference type="EC" id="5.3.3.2" evidence="1"/>
<dbReference type="EMBL" id="AE009949">
    <property type="protein sequence ID" value="AAL97582.1"/>
    <property type="molecule type" value="Genomic_DNA"/>
</dbReference>
<dbReference type="RefSeq" id="WP_010922169.1">
    <property type="nucleotide sequence ID" value="NC_003485.1"/>
</dbReference>
<dbReference type="SMR" id="P65105"/>
<dbReference type="GeneID" id="69901016"/>
<dbReference type="KEGG" id="spm:spyM18_0940"/>
<dbReference type="HOGENOM" id="CLU_065515_0_0_9"/>
<dbReference type="GO" id="GO:0005737">
    <property type="term" value="C:cytoplasm"/>
    <property type="evidence" value="ECO:0007669"/>
    <property type="project" value="UniProtKB-SubCell"/>
</dbReference>
<dbReference type="GO" id="GO:0010181">
    <property type="term" value="F:FMN binding"/>
    <property type="evidence" value="ECO:0007669"/>
    <property type="project" value="UniProtKB-UniRule"/>
</dbReference>
<dbReference type="GO" id="GO:0004452">
    <property type="term" value="F:isopentenyl-diphosphate delta-isomerase activity"/>
    <property type="evidence" value="ECO:0007669"/>
    <property type="project" value="UniProtKB-UniRule"/>
</dbReference>
<dbReference type="GO" id="GO:0000287">
    <property type="term" value="F:magnesium ion binding"/>
    <property type="evidence" value="ECO:0007669"/>
    <property type="project" value="UniProtKB-UniRule"/>
</dbReference>
<dbReference type="GO" id="GO:0070402">
    <property type="term" value="F:NADPH binding"/>
    <property type="evidence" value="ECO:0007669"/>
    <property type="project" value="UniProtKB-UniRule"/>
</dbReference>
<dbReference type="GO" id="GO:0016491">
    <property type="term" value="F:oxidoreductase activity"/>
    <property type="evidence" value="ECO:0007669"/>
    <property type="project" value="InterPro"/>
</dbReference>
<dbReference type="GO" id="GO:0008299">
    <property type="term" value="P:isoprenoid biosynthetic process"/>
    <property type="evidence" value="ECO:0007669"/>
    <property type="project" value="UniProtKB-UniRule"/>
</dbReference>
<dbReference type="CDD" id="cd02811">
    <property type="entry name" value="IDI-2_FMN"/>
    <property type="match status" value="1"/>
</dbReference>
<dbReference type="Gene3D" id="3.20.20.70">
    <property type="entry name" value="Aldolase class I"/>
    <property type="match status" value="1"/>
</dbReference>
<dbReference type="HAMAP" id="MF_00354">
    <property type="entry name" value="Idi_2"/>
    <property type="match status" value="1"/>
</dbReference>
<dbReference type="InterPro" id="IPR013785">
    <property type="entry name" value="Aldolase_TIM"/>
</dbReference>
<dbReference type="InterPro" id="IPR000262">
    <property type="entry name" value="FMN-dep_DH"/>
</dbReference>
<dbReference type="InterPro" id="IPR011179">
    <property type="entry name" value="IPdP_isomerase"/>
</dbReference>
<dbReference type="NCBIfam" id="TIGR02151">
    <property type="entry name" value="IPP_isom_2"/>
    <property type="match status" value="1"/>
</dbReference>
<dbReference type="PANTHER" id="PTHR43665">
    <property type="entry name" value="ISOPENTENYL-DIPHOSPHATE DELTA-ISOMERASE"/>
    <property type="match status" value="1"/>
</dbReference>
<dbReference type="PANTHER" id="PTHR43665:SF1">
    <property type="entry name" value="ISOPENTENYL-DIPHOSPHATE DELTA-ISOMERASE"/>
    <property type="match status" value="1"/>
</dbReference>
<dbReference type="Pfam" id="PF01070">
    <property type="entry name" value="FMN_dh"/>
    <property type="match status" value="2"/>
</dbReference>
<dbReference type="PIRSF" id="PIRSF003314">
    <property type="entry name" value="IPP_isomerase"/>
    <property type="match status" value="1"/>
</dbReference>
<dbReference type="SUPFAM" id="SSF51395">
    <property type="entry name" value="FMN-linked oxidoreductases"/>
    <property type="match status" value="1"/>
</dbReference>
<feature type="chain" id="PRO_0000134436" description="Isopentenyl-diphosphate delta-isomerase">
    <location>
        <begin position="1"/>
        <end position="329"/>
    </location>
</feature>
<feature type="binding site" evidence="1">
    <location>
        <begin position="4"/>
        <end position="5"/>
    </location>
    <ligand>
        <name>substrate</name>
    </ligand>
</feature>
<feature type="binding site" evidence="1">
    <location>
        <begin position="59"/>
        <end position="61"/>
    </location>
    <ligand>
        <name>FMN</name>
        <dbReference type="ChEBI" id="CHEBI:58210"/>
    </ligand>
</feature>
<feature type="binding site" evidence="1">
    <location>
        <position position="89"/>
    </location>
    <ligand>
        <name>FMN</name>
        <dbReference type="ChEBI" id="CHEBI:58210"/>
    </ligand>
</feature>
<feature type="binding site" evidence="1">
    <location>
        <position position="116"/>
    </location>
    <ligand>
        <name>FMN</name>
        <dbReference type="ChEBI" id="CHEBI:58210"/>
    </ligand>
</feature>
<feature type="binding site" evidence="1">
    <location>
        <position position="146"/>
    </location>
    <ligand>
        <name>substrate</name>
    </ligand>
</feature>
<feature type="binding site" evidence="1">
    <location>
        <position position="147"/>
    </location>
    <ligand>
        <name>Mg(2+)</name>
        <dbReference type="ChEBI" id="CHEBI:18420"/>
    </ligand>
</feature>
<feature type="binding site" evidence="1">
    <location>
        <position position="178"/>
    </location>
    <ligand>
        <name>FMN</name>
        <dbReference type="ChEBI" id="CHEBI:58210"/>
    </ligand>
</feature>
<feature type="binding site" evidence="1">
    <location>
        <position position="203"/>
    </location>
    <ligand>
        <name>FMN</name>
        <dbReference type="ChEBI" id="CHEBI:58210"/>
    </ligand>
</feature>
<feature type="binding site" evidence="1">
    <location>
        <position position="208"/>
    </location>
    <ligand>
        <name>FMN</name>
        <dbReference type="ChEBI" id="CHEBI:58210"/>
    </ligand>
</feature>
<feature type="binding site" evidence="1">
    <location>
        <begin position="252"/>
        <end position="254"/>
    </location>
    <ligand>
        <name>FMN</name>
        <dbReference type="ChEBI" id="CHEBI:58210"/>
    </ligand>
</feature>
<feature type="binding site" evidence="1">
    <location>
        <begin position="273"/>
        <end position="274"/>
    </location>
    <ligand>
        <name>FMN</name>
        <dbReference type="ChEBI" id="CHEBI:58210"/>
    </ligand>
</feature>
<reference key="1">
    <citation type="journal article" date="2002" name="Proc. Natl. Acad. Sci. U.S.A.">
        <title>Genome sequence and comparative microarray analysis of serotype M18 group A Streptococcus strains associated with acute rheumatic fever outbreaks.</title>
        <authorList>
            <person name="Smoot J.C."/>
            <person name="Barbian K.D."/>
            <person name="Van Gompel J.J."/>
            <person name="Smoot L.M."/>
            <person name="Chaussee M.S."/>
            <person name="Sylva G.L."/>
            <person name="Sturdevant D.E."/>
            <person name="Ricklefs S.M."/>
            <person name="Porcella S.F."/>
            <person name="Parkins L.D."/>
            <person name="Beres S.B."/>
            <person name="Campbell D.S."/>
            <person name="Smith T.M."/>
            <person name="Zhang Q."/>
            <person name="Kapur V."/>
            <person name="Daly J.A."/>
            <person name="Veasy L.G."/>
            <person name="Musser J.M."/>
        </authorList>
    </citation>
    <scope>NUCLEOTIDE SEQUENCE [LARGE SCALE GENOMIC DNA]</scope>
    <source>
        <strain>MGAS8232</strain>
    </source>
</reference>
<protein>
    <recommendedName>
        <fullName evidence="1">Isopentenyl-diphosphate delta-isomerase</fullName>
        <shortName evidence="1">IPP isomerase</shortName>
        <ecNumber evidence="1">5.3.3.2</ecNumber>
    </recommendedName>
    <alternativeName>
        <fullName evidence="1">Isopentenyl diphosphate:dimethylallyl diphosphate isomerase</fullName>
    </alternativeName>
    <alternativeName>
        <fullName evidence="1">Isopentenyl pyrophosphate isomerase</fullName>
    </alternativeName>
    <alternativeName>
        <fullName evidence="1">Type 2 isopentenyl diphosphate isomerase</fullName>
        <shortName evidence="1">IDI-2</shortName>
    </alternativeName>
</protein>
<name>IDI2_STRP8</name>
<organism>
    <name type="scientific">Streptococcus pyogenes serotype M18 (strain MGAS8232)</name>
    <dbReference type="NCBI Taxonomy" id="186103"/>
    <lineage>
        <taxon>Bacteria</taxon>
        <taxon>Bacillati</taxon>
        <taxon>Bacillota</taxon>
        <taxon>Bacilli</taxon>
        <taxon>Lactobacillales</taxon>
        <taxon>Streptococcaceae</taxon>
        <taxon>Streptococcus</taxon>
    </lineage>
</organism>